<feature type="chain" id="PRO_0000281378" description="Epoxide hydrolase 4">
    <location>
        <begin position="1"/>
        <end position="362"/>
    </location>
</feature>
<feature type="transmembrane region" description="Helical; Signal-anchor for type II membrane protein" evidence="2">
    <location>
        <begin position="17"/>
        <end position="37"/>
    </location>
</feature>
<feature type="domain" description="AB hydrolase-1" evidence="2">
    <location>
        <begin position="94"/>
        <end position="211"/>
    </location>
</feature>
<feature type="active site" description="Nucleophile" evidence="1">
    <location>
        <position position="169"/>
    </location>
</feature>
<feature type="active site" description="Proton donor" evidence="1">
    <location>
        <position position="281"/>
    </location>
</feature>
<feature type="active site" description="Proton acceptor" evidence="1">
    <location>
        <position position="336"/>
    </location>
</feature>
<feature type="sequence variant" id="VAR_031235" description="In dbSNP:rs17854127." evidence="3">
    <original>Y</original>
    <variation>F</variation>
    <location>
        <position position="321"/>
    </location>
</feature>
<feature type="sequence conflict" description="In Ref. 1; BAC11230." evidence="4" ref="1">
    <original>F</original>
    <variation>I</variation>
    <location>
        <position position="285"/>
    </location>
</feature>
<accession>Q8IUS5</accession>
<accession>Q8NCC6</accession>
<organism>
    <name type="scientific">Homo sapiens</name>
    <name type="common">Human</name>
    <dbReference type="NCBI Taxonomy" id="9606"/>
    <lineage>
        <taxon>Eukaryota</taxon>
        <taxon>Metazoa</taxon>
        <taxon>Chordata</taxon>
        <taxon>Craniata</taxon>
        <taxon>Vertebrata</taxon>
        <taxon>Euteleostomi</taxon>
        <taxon>Mammalia</taxon>
        <taxon>Eutheria</taxon>
        <taxon>Euarchontoglires</taxon>
        <taxon>Primates</taxon>
        <taxon>Haplorrhini</taxon>
        <taxon>Catarrhini</taxon>
        <taxon>Hominidae</taxon>
        <taxon>Homo</taxon>
    </lineage>
</organism>
<name>EPHX4_HUMAN</name>
<reference key="1">
    <citation type="journal article" date="2004" name="Nat. Genet.">
        <title>Complete sequencing and characterization of 21,243 full-length human cDNAs.</title>
        <authorList>
            <person name="Ota T."/>
            <person name="Suzuki Y."/>
            <person name="Nishikawa T."/>
            <person name="Otsuki T."/>
            <person name="Sugiyama T."/>
            <person name="Irie R."/>
            <person name="Wakamatsu A."/>
            <person name="Hayashi K."/>
            <person name="Sato H."/>
            <person name="Nagai K."/>
            <person name="Kimura K."/>
            <person name="Makita H."/>
            <person name="Sekine M."/>
            <person name="Obayashi M."/>
            <person name="Nishi T."/>
            <person name="Shibahara T."/>
            <person name="Tanaka T."/>
            <person name="Ishii S."/>
            <person name="Yamamoto J."/>
            <person name="Saito K."/>
            <person name="Kawai Y."/>
            <person name="Isono Y."/>
            <person name="Nakamura Y."/>
            <person name="Nagahari K."/>
            <person name="Murakami K."/>
            <person name="Yasuda T."/>
            <person name="Iwayanagi T."/>
            <person name="Wagatsuma M."/>
            <person name="Shiratori A."/>
            <person name="Sudo H."/>
            <person name="Hosoiri T."/>
            <person name="Kaku Y."/>
            <person name="Kodaira H."/>
            <person name="Kondo H."/>
            <person name="Sugawara M."/>
            <person name="Takahashi M."/>
            <person name="Kanda K."/>
            <person name="Yokoi T."/>
            <person name="Furuya T."/>
            <person name="Kikkawa E."/>
            <person name="Omura Y."/>
            <person name="Abe K."/>
            <person name="Kamihara K."/>
            <person name="Katsuta N."/>
            <person name="Sato K."/>
            <person name="Tanikawa M."/>
            <person name="Yamazaki M."/>
            <person name="Ninomiya K."/>
            <person name="Ishibashi T."/>
            <person name="Yamashita H."/>
            <person name="Murakawa K."/>
            <person name="Fujimori K."/>
            <person name="Tanai H."/>
            <person name="Kimata M."/>
            <person name="Watanabe M."/>
            <person name="Hiraoka S."/>
            <person name="Chiba Y."/>
            <person name="Ishida S."/>
            <person name="Ono Y."/>
            <person name="Takiguchi S."/>
            <person name="Watanabe S."/>
            <person name="Yosida M."/>
            <person name="Hotuta T."/>
            <person name="Kusano J."/>
            <person name="Kanehori K."/>
            <person name="Takahashi-Fujii A."/>
            <person name="Hara H."/>
            <person name="Tanase T.-O."/>
            <person name="Nomura Y."/>
            <person name="Togiya S."/>
            <person name="Komai F."/>
            <person name="Hara R."/>
            <person name="Takeuchi K."/>
            <person name="Arita M."/>
            <person name="Imose N."/>
            <person name="Musashino K."/>
            <person name="Yuuki H."/>
            <person name="Oshima A."/>
            <person name="Sasaki N."/>
            <person name="Aotsuka S."/>
            <person name="Yoshikawa Y."/>
            <person name="Matsunawa H."/>
            <person name="Ichihara T."/>
            <person name="Shiohata N."/>
            <person name="Sano S."/>
            <person name="Moriya S."/>
            <person name="Momiyama H."/>
            <person name="Satoh N."/>
            <person name="Takami S."/>
            <person name="Terashima Y."/>
            <person name="Suzuki O."/>
            <person name="Nakagawa S."/>
            <person name="Senoh A."/>
            <person name="Mizoguchi H."/>
            <person name="Goto Y."/>
            <person name="Shimizu F."/>
            <person name="Wakebe H."/>
            <person name="Hishigaki H."/>
            <person name="Watanabe T."/>
            <person name="Sugiyama A."/>
            <person name="Takemoto M."/>
            <person name="Kawakami B."/>
            <person name="Yamazaki M."/>
            <person name="Watanabe K."/>
            <person name="Kumagai A."/>
            <person name="Itakura S."/>
            <person name="Fukuzumi Y."/>
            <person name="Fujimori Y."/>
            <person name="Komiyama M."/>
            <person name="Tashiro H."/>
            <person name="Tanigami A."/>
            <person name="Fujiwara T."/>
            <person name="Ono T."/>
            <person name="Yamada K."/>
            <person name="Fujii Y."/>
            <person name="Ozaki K."/>
            <person name="Hirao M."/>
            <person name="Ohmori Y."/>
            <person name="Kawabata A."/>
            <person name="Hikiji T."/>
            <person name="Kobatake N."/>
            <person name="Inagaki H."/>
            <person name="Ikema Y."/>
            <person name="Okamoto S."/>
            <person name="Okitani R."/>
            <person name="Kawakami T."/>
            <person name="Noguchi S."/>
            <person name="Itoh T."/>
            <person name="Shigeta K."/>
            <person name="Senba T."/>
            <person name="Matsumura K."/>
            <person name="Nakajima Y."/>
            <person name="Mizuno T."/>
            <person name="Morinaga M."/>
            <person name="Sasaki M."/>
            <person name="Togashi T."/>
            <person name="Oyama M."/>
            <person name="Hata H."/>
            <person name="Watanabe M."/>
            <person name="Komatsu T."/>
            <person name="Mizushima-Sugano J."/>
            <person name="Satoh T."/>
            <person name="Shirai Y."/>
            <person name="Takahashi Y."/>
            <person name="Nakagawa K."/>
            <person name="Okumura K."/>
            <person name="Nagase T."/>
            <person name="Nomura N."/>
            <person name="Kikuchi H."/>
            <person name="Masuho Y."/>
            <person name="Yamashita R."/>
            <person name="Nakai K."/>
            <person name="Yada T."/>
            <person name="Nakamura Y."/>
            <person name="Ohara O."/>
            <person name="Isogai T."/>
            <person name="Sugano S."/>
        </authorList>
    </citation>
    <scope>NUCLEOTIDE SEQUENCE [LARGE SCALE MRNA]</scope>
    <source>
        <tissue>Teratocarcinoma</tissue>
    </source>
</reference>
<reference key="2">
    <citation type="journal article" date="2004" name="Genome Res.">
        <title>The status, quality, and expansion of the NIH full-length cDNA project: the Mammalian Gene Collection (MGC).</title>
        <authorList>
            <consortium name="The MGC Project Team"/>
        </authorList>
    </citation>
    <scope>NUCLEOTIDE SEQUENCE [LARGE SCALE MRNA]</scope>
    <scope>VARIANT PHE-321</scope>
    <source>
        <tissue>Brain</tissue>
    </source>
</reference>
<evidence type="ECO:0000250" key="1"/>
<evidence type="ECO:0000255" key="2"/>
<evidence type="ECO:0000269" key="3">
    <source>
    </source>
</evidence>
<evidence type="ECO:0000305" key="4"/>
<keyword id="KW-0378">Hydrolase</keyword>
<keyword id="KW-0472">Membrane</keyword>
<keyword id="KW-1267">Proteomics identification</keyword>
<keyword id="KW-1185">Reference proteome</keyword>
<keyword id="KW-0735">Signal-anchor</keyword>
<keyword id="KW-0812">Transmembrane</keyword>
<keyword id="KW-1133">Transmembrane helix</keyword>
<protein>
    <recommendedName>
        <fullName>Epoxide hydrolase 4</fullName>
        <ecNumber>3.3.-.-</ecNumber>
    </recommendedName>
    <alternativeName>
        <fullName>Abhydrolase domain-containing protein 7</fullName>
    </alternativeName>
    <alternativeName>
        <fullName>Epoxide hydrolase-related protein</fullName>
    </alternativeName>
</protein>
<gene>
    <name type="primary">EPHX4</name>
    <name type="synonym">ABHD7</name>
    <name type="synonym">EH4</name>
    <name type="synonym">EPHXRP</name>
</gene>
<proteinExistence type="evidence at protein level"/>
<dbReference type="EC" id="3.3.-.-"/>
<dbReference type="EMBL" id="AK074822">
    <property type="protein sequence ID" value="BAC11230.1"/>
    <property type="molecule type" value="mRNA"/>
</dbReference>
<dbReference type="EMBL" id="BC041475">
    <property type="protein sequence ID" value="AAH41475.1"/>
    <property type="molecule type" value="mRNA"/>
</dbReference>
<dbReference type="CCDS" id="CCDS736.1"/>
<dbReference type="RefSeq" id="NP_775838.3">
    <property type="nucleotide sequence ID" value="NM_173567.4"/>
</dbReference>
<dbReference type="SMR" id="Q8IUS5"/>
<dbReference type="BioGRID" id="128958">
    <property type="interactions" value="43"/>
</dbReference>
<dbReference type="FunCoup" id="Q8IUS5">
    <property type="interactions" value="3"/>
</dbReference>
<dbReference type="IntAct" id="Q8IUS5">
    <property type="interactions" value="22"/>
</dbReference>
<dbReference type="STRING" id="9606.ENSP00000359410"/>
<dbReference type="ESTHER" id="human-EPHX4">
    <property type="family name" value="Epoxide_hydrolase"/>
</dbReference>
<dbReference type="MEROPS" id="S33.974"/>
<dbReference type="iPTMnet" id="Q8IUS5"/>
<dbReference type="PhosphoSitePlus" id="Q8IUS5"/>
<dbReference type="SwissPalm" id="Q8IUS5"/>
<dbReference type="BioMuta" id="EPHX4"/>
<dbReference type="DMDM" id="134035378"/>
<dbReference type="jPOST" id="Q8IUS5"/>
<dbReference type="MassIVE" id="Q8IUS5"/>
<dbReference type="PaxDb" id="9606-ENSP00000359410"/>
<dbReference type="PeptideAtlas" id="Q8IUS5"/>
<dbReference type="ProteomicsDB" id="70611"/>
<dbReference type="Pumba" id="Q8IUS5"/>
<dbReference type="Antibodypedia" id="33635">
    <property type="antibodies" value="93 antibodies from 17 providers"/>
</dbReference>
<dbReference type="DNASU" id="253152"/>
<dbReference type="Ensembl" id="ENST00000370383.5">
    <property type="protein sequence ID" value="ENSP00000359410.4"/>
    <property type="gene ID" value="ENSG00000172031.7"/>
</dbReference>
<dbReference type="GeneID" id="253152"/>
<dbReference type="KEGG" id="hsa:253152"/>
<dbReference type="MANE-Select" id="ENST00000370383.5">
    <property type="protein sequence ID" value="ENSP00000359410.4"/>
    <property type="RefSeq nucleotide sequence ID" value="NM_173567.5"/>
    <property type="RefSeq protein sequence ID" value="NP_775838.3"/>
</dbReference>
<dbReference type="UCSC" id="uc001don.3">
    <property type="organism name" value="human"/>
</dbReference>
<dbReference type="AGR" id="HGNC:23758"/>
<dbReference type="CTD" id="253152"/>
<dbReference type="DisGeNET" id="253152"/>
<dbReference type="GeneCards" id="EPHX4"/>
<dbReference type="HGNC" id="HGNC:23758">
    <property type="gene designation" value="EPHX4"/>
</dbReference>
<dbReference type="HPA" id="ENSG00000172031">
    <property type="expression patterns" value="Group enriched (brain, choroid plexus)"/>
</dbReference>
<dbReference type="MIM" id="617401">
    <property type="type" value="gene"/>
</dbReference>
<dbReference type="neXtProt" id="NX_Q8IUS5"/>
<dbReference type="OpenTargets" id="ENSG00000172031"/>
<dbReference type="PharmGKB" id="PA164719207"/>
<dbReference type="VEuPathDB" id="HostDB:ENSG00000172031"/>
<dbReference type="eggNOG" id="KOG4178">
    <property type="taxonomic scope" value="Eukaryota"/>
</dbReference>
<dbReference type="GeneTree" id="ENSGT00940000156233"/>
<dbReference type="HOGENOM" id="CLU_020336_7_3_1"/>
<dbReference type="InParanoid" id="Q8IUS5"/>
<dbReference type="OMA" id="YRWMVRS"/>
<dbReference type="OrthoDB" id="408373at2759"/>
<dbReference type="PAN-GO" id="Q8IUS5">
    <property type="GO annotations" value="1 GO annotation based on evolutionary models"/>
</dbReference>
<dbReference type="PhylomeDB" id="Q8IUS5"/>
<dbReference type="TreeFam" id="TF314403"/>
<dbReference type="PathwayCommons" id="Q8IUS5"/>
<dbReference type="SignaLink" id="Q8IUS5"/>
<dbReference type="BioGRID-ORCS" id="253152">
    <property type="hits" value="8 hits in 1153 CRISPR screens"/>
</dbReference>
<dbReference type="ChiTaRS" id="EPHX4">
    <property type="organism name" value="human"/>
</dbReference>
<dbReference type="GenomeRNAi" id="253152"/>
<dbReference type="Pharos" id="Q8IUS5">
    <property type="development level" value="Tbio"/>
</dbReference>
<dbReference type="PRO" id="PR:Q8IUS5"/>
<dbReference type="Proteomes" id="UP000005640">
    <property type="component" value="Chromosome 1"/>
</dbReference>
<dbReference type="RNAct" id="Q8IUS5">
    <property type="molecule type" value="protein"/>
</dbReference>
<dbReference type="Bgee" id="ENSG00000172031">
    <property type="expression patterns" value="Expressed in primordial germ cell in gonad and 108 other cell types or tissues"/>
</dbReference>
<dbReference type="GO" id="GO:0016020">
    <property type="term" value="C:membrane"/>
    <property type="evidence" value="ECO:0007669"/>
    <property type="project" value="UniProtKB-SubCell"/>
</dbReference>
<dbReference type="GO" id="GO:0004301">
    <property type="term" value="F:epoxide hydrolase activity"/>
    <property type="evidence" value="ECO:0007669"/>
    <property type="project" value="UniProtKB-ARBA"/>
</dbReference>
<dbReference type="GO" id="GO:0016787">
    <property type="term" value="F:hydrolase activity"/>
    <property type="evidence" value="ECO:0000318"/>
    <property type="project" value="GO_Central"/>
</dbReference>
<dbReference type="Gene3D" id="3.40.50.1820">
    <property type="entry name" value="alpha/beta hydrolase"/>
    <property type="match status" value="1"/>
</dbReference>
<dbReference type="InterPro" id="IPR000073">
    <property type="entry name" value="AB_hydrolase_1"/>
</dbReference>
<dbReference type="InterPro" id="IPR029058">
    <property type="entry name" value="AB_hydrolase_fold"/>
</dbReference>
<dbReference type="InterPro" id="IPR000639">
    <property type="entry name" value="Epox_hydrolase-like"/>
</dbReference>
<dbReference type="PANTHER" id="PTHR43329">
    <property type="entry name" value="EPOXIDE HYDROLASE"/>
    <property type="match status" value="1"/>
</dbReference>
<dbReference type="Pfam" id="PF00561">
    <property type="entry name" value="Abhydrolase_1"/>
    <property type="match status" value="1"/>
</dbReference>
<dbReference type="PRINTS" id="PR00111">
    <property type="entry name" value="ABHYDROLASE"/>
</dbReference>
<dbReference type="PRINTS" id="PR00412">
    <property type="entry name" value="EPOXHYDRLASE"/>
</dbReference>
<dbReference type="SUPFAM" id="SSF53474">
    <property type="entry name" value="alpha/beta-Hydrolases"/>
    <property type="match status" value="1"/>
</dbReference>
<sequence length="362" mass="42324">MARLRDCLPRLMLTLRSLLFWSLVYCYCGLCASIHLLKLLWSLGKGPAQTFRRPAREHPPACLSDPSLGTHCYVRIKDSGLRFHYVAAGERGKPLMLLLHGFPEFWYSWRYQLREFKSEYRVVALDLRGYGETDAPIHRQNYKLDCLITDIKDILDSLGYSKCVLIGHDWGGMIAWLIAICYPEMVMKLIVINFPHPNVFTEYILRHPAQLLKSSYYYFFQIPWFPEFMFSINDFKVLKHLFTSHSTGIGRKGCQLTTEDLEAYIYVFSQPGALSGPINHYRNIFSCLPLKHHMVTTPTLLLWGENDAFMEVEMAEVTKIYVKNYFRLTILSEASHWLQQDQPDIVNKLIWTFLKEETRKKD</sequence>
<comment type="interaction">
    <interactant intactId="EBI-17962164">
        <id>Q8IUS5</id>
    </interactant>
    <interactant intactId="EBI-8638294">
        <id>Q9NUH8</id>
        <label>TMEM14B</label>
    </interactant>
    <organismsDiffer>false</organismsDiffer>
    <experiments>3</experiments>
</comment>
<comment type="subcellular location">
    <subcellularLocation>
        <location evidence="4">Membrane</location>
        <topology evidence="4">Single-pass type II membrane protein</topology>
    </subcellularLocation>
</comment>
<comment type="similarity">
    <text evidence="4">Belongs to the AB hydrolase superfamily. Epoxide hydrolase family.</text>
</comment>